<gene>
    <name evidence="1" type="primary">yidC</name>
    <name type="ordered locus">SACOL2082</name>
</gene>
<name>YIDC_STAAC</name>
<feature type="signal peptide" evidence="1">
    <location>
        <begin position="1"/>
        <end position="19"/>
    </location>
</feature>
<feature type="chain" id="PRO_0000042934" description="Membrane protein insertase YidC">
    <location>
        <begin position="20"/>
        <end position="290"/>
    </location>
</feature>
<feature type="transmembrane region" description="Helical" evidence="1">
    <location>
        <begin position="56"/>
        <end position="76"/>
    </location>
</feature>
<feature type="transmembrane region" description="Helical" evidence="1">
    <location>
        <begin position="134"/>
        <end position="154"/>
    </location>
</feature>
<feature type="transmembrane region" description="Helical" evidence="1">
    <location>
        <begin position="176"/>
        <end position="196"/>
    </location>
</feature>
<feature type="transmembrane region" description="Helical" evidence="1">
    <location>
        <begin position="207"/>
        <end position="224"/>
    </location>
</feature>
<feature type="transmembrane region" description="Helical" evidence="1">
    <location>
        <begin position="229"/>
        <end position="251"/>
    </location>
</feature>
<feature type="region of interest" description="Disordered" evidence="2">
    <location>
        <begin position="270"/>
        <end position="290"/>
    </location>
</feature>
<feature type="lipid moiety-binding region" description="N-palmitoyl cysteine" evidence="1">
    <location>
        <position position="20"/>
    </location>
</feature>
<feature type="lipid moiety-binding region" description="S-diacylglycerol cysteine" evidence="1">
    <location>
        <position position="20"/>
    </location>
</feature>
<comment type="function">
    <text evidence="1">Required for the insertion and/or proper folding and/or complex formation of integral membrane proteins into the membrane. Involved in integration of membrane proteins that insert both dependently and independently of the Sec translocase complex, as well as at least some lipoproteins.</text>
</comment>
<comment type="subcellular location">
    <subcellularLocation>
        <location evidence="1">Cell membrane</location>
        <topology evidence="1">Multi-pass membrane protein</topology>
    </subcellularLocation>
</comment>
<comment type="similarity">
    <text evidence="1">Belongs to the OXA1/ALB3/YidC family. Type 2 subfamily.</text>
</comment>
<evidence type="ECO:0000255" key="1">
    <source>
        <dbReference type="HAMAP-Rule" id="MF_01811"/>
    </source>
</evidence>
<evidence type="ECO:0000256" key="2">
    <source>
        <dbReference type="SAM" id="MobiDB-lite"/>
    </source>
</evidence>
<dbReference type="EMBL" id="CP000046">
    <property type="protein sequence ID" value="AAW37044.1"/>
    <property type="molecule type" value="Genomic_DNA"/>
</dbReference>
<dbReference type="RefSeq" id="WP_000725802.1">
    <property type="nucleotide sequence ID" value="NZ_JBGOFO010000007.1"/>
</dbReference>
<dbReference type="SMR" id="Q5HEA9"/>
<dbReference type="KEGG" id="sac:SACOL2082"/>
<dbReference type="HOGENOM" id="CLU_036138_5_2_9"/>
<dbReference type="Proteomes" id="UP000000530">
    <property type="component" value="Chromosome"/>
</dbReference>
<dbReference type="GO" id="GO:0005886">
    <property type="term" value="C:plasma membrane"/>
    <property type="evidence" value="ECO:0007669"/>
    <property type="project" value="UniProtKB-SubCell"/>
</dbReference>
<dbReference type="GO" id="GO:0032977">
    <property type="term" value="F:membrane insertase activity"/>
    <property type="evidence" value="ECO:0007669"/>
    <property type="project" value="InterPro"/>
</dbReference>
<dbReference type="GO" id="GO:0051205">
    <property type="term" value="P:protein insertion into membrane"/>
    <property type="evidence" value="ECO:0007669"/>
    <property type="project" value="TreeGrafter"/>
</dbReference>
<dbReference type="GO" id="GO:0015031">
    <property type="term" value="P:protein transport"/>
    <property type="evidence" value="ECO:0007669"/>
    <property type="project" value="UniProtKB-KW"/>
</dbReference>
<dbReference type="CDD" id="cd20070">
    <property type="entry name" value="5TM_YidC_Alb3"/>
    <property type="match status" value="1"/>
</dbReference>
<dbReference type="HAMAP" id="MF_01811">
    <property type="entry name" value="YidC_type2"/>
    <property type="match status" value="1"/>
</dbReference>
<dbReference type="InterPro" id="IPR001708">
    <property type="entry name" value="YidC/ALB3/OXA1/COX18"/>
</dbReference>
<dbReference type="InterPro" id="IPR028055">
    <property type="entry name" value="YidC/Oxa/ALB_C"/>
</dbReference>
<dbReference type="InterPro" id="IPR023060">
    <property type="entry name" value="YidC/YidC1/YidC2_Firmicutes"/>
</dbReference>
<dbReference type="InterPro" id="IPR047196">
    <property type="entry name" value="YidC_ALB_C"/>
</dbReference>
<dbReference type="NCBIfam" id="TIGR03592">
    <property type="entry name" value="yidC_oxa1_cterm"/>
    <property type="match status" value="1"/>
</dbReference>
<dbReference type="PANTHER" id="PTHR12428:SF65">
    <property type="entry name" value="CYTOCHROME C OXIDASE ASSEMBLY PROTEIN COX18, MITOCHONDRIAL"/>
    <property type="match status" value="1"/>
</dbReference>
<dbReference type="PANTHER" id="PTHR12428">
    <property type="entry name" value="OXA1"/>
    <property type="match status" value="1"/>
</dbReference>
<dbReference type="Pfam" id="PF02096">
    <property type="entry name" value="60KD_IMP"/>
    <property type="match status" value="1"/>
</dbReference>
<dbReference type="PRINTS" id="PR00701">
    <property type="entry name" value="60KDINNERMP"/>
</dbReference>
<dbReference type="PROSITE" id="PS51257">
    <property type="entry name" value="PROKAR_LIPOPROTEIN"/>
    <property type="match status" value="1"/>
</dbReference>
<keyword id="KW-1003">Cell membrane</keyword>
<keyword id="KW-0143">Chaperone</keyword>
<keyword id="KW-0449">Lipoprotein</keyword>
<keyword id="KW-0472">Membrane</keyword>
<keyword id="KW-0564">Palmitate</keyword>
<keyword id="KW-0653">Protein transport</keyword>
<keyword id="KW-0732">Signal</keyword>
<keyword id="KW-0812">Transmembrane</keyword>
<keyword id="KW-1133">Transmembrane helix</keyword>
<keyword id="KW-0813">Transport</keyword>
<protein>
    <recommendedName>
        <fullName evidence="1">Membrane protein insertase YidC</fullName>
    </recommendedName>
    <alternativeName>
        <fullName evidence="1">Foldase YidC</fullName>
    </alternativeName>
    <alternativeName>
        <fullName evidence="1">Membrane integrase YidC</fullName>
    </alternativeName>
    <alternativeName>
        <fullName evidence="1">Membrane protein YidC</fullName>
    </alternativeName>
</protein>
<accession>Q5HEA9</accession>
<reference key="1">
    <citation type="journal article" date="2005" name="J. Bacteriol.">
        <title>Insights on evolution of virulence and resistance from the complete genome analysis of an early methicillin-resistant Staphylococcus aureus strain and a biofilm-producing methicillin-resistant Staphylococcus epidermidis strain.</title>
        <authorList>
            <person name="Gill S.R."/>
            <person name="Fouts D.E."/>
            <person name="Archer G.L."/>
            <person name="Mongodin E.F."/>
            <person name="DeBoy R.T."/>
            <person name="Ravel J."/>
            <person name="Paulsen I.T."/>
            <person name="Kolonay J.F."/>
            <person name="Brinkac L.M."/>
            <person name="Beanan M.J."/>
            <person name="Dodson R.J."/>
            <person name="Daugherty S.C."/>
            <person name="Madupu R."/>
            <person name="Angiuoli S.V."/>
            <person name="Durkin A.S."/>
            <person name="Haft D.H."/>
            <person name="Vamathevan J.J."/>
            <person name="Khouri H."/>
            <person name="Utterback T.R."/>
            <person name="Lee C."/>
            <person name="Dimitrov G."/>
            <person name="Jiang L."/>
            <person name="Qin H."/>
            <person name="Weidman J."/>
            <person name="Tran K."/>
            <person name="Kang K.H."/>
            <person name="Hance I.R."/>
            <person name="Nelson K.E."/>
            <person name="Fraser C.M."/>
        </authorList>
    </citation>
    <scope>NUCLEOTIDE SEQUENCE [LARGE SCALE GENOMIC DNA]</scope>
    <source>
        <strain>COL</strain>
    </source>
</reference>
<sequence length="290" mass="33581">MKKKALLPLFLGIMVFLAGCDYSKPEKRSGFFYNTFVDPMKNVLDWLGNNLLNDNYGLAIIILVLVIRIILLPFMLSNYKNSHMMRQKMKVAKPEVEKIQEKVKRARTQEEKMAANQELMQVYKKYDMNPIKSMLGCLPMLIQLPIIMGLYFVLKDQLVDGLFKYPHFLWFDLGRPDIWITIIAGVLYFIQAYVSSKTMPDEQRQMGYMMMVISPIMIIWISLSSASALGLYWSVSAAFLVVQTHFANIYYEKVAKKEVQPFIEAYEREHNGGSNKKGKNTQVVSKKKKK</sequence>
<proteinExistence type="inferred from homology"/>
<organism>
    <name type="scientific">Staphylococcus aureus (strain COL)</name>
    <dbReference type="NCBI Taxonomy" id="93062"/>
    <lineage>
        <taxon>Bacteria</taxon>
        <taxon>Bacillati</taxon>
        <taxon>Bacillota</taxon>
        <taxon>Bacilli</taxon>
        <taxon>Bacillales</taxon>
        <taxon>Staphylococcaceae</taxon>
        <taxon>Staphylococcus</taxon>
    </lineage>
</organism>